<keyword id="KW-0456">Lyase</keyword>
<keyword id="KW-0819">tRNA processing</keyword>
<reference key="1">
    <citation type="journal article" date="2009" name="Proc. Natl. Acad. Sci. U.S.A.">
        <title>Biogeography of the Sulfolobus islandicus pan-genome.</title>
        <authorList>
            <person name="Reno M.L."/>
            <person name="Held N.L."/>
            <person name="Fields C.J."/>
            <person name="Burke P.V."/>
            <person name="Whitaker R.J."/>
        </authorList>
    </citation>
    <scope>NUCLEOTIDE SEQUENCE [LARGE SCALE GENOMIC DNA]</scope>
    <source>
        <strain>L.S.2.15 / Lassen #1</strain>
    </source>
</reference>
<proteinExistence type="inferred from homology"/>
<gene>
    <name evidence="1" type="primary">endA</name>
    <name type="ordered locus">LS215_1794</name>
</gene>
<name>ENDA_SACI2</name>
<comment type="function">
    <text evidence="1">Endonuclease that removes tRNA introns. Cleaves pre-tRNA at the 5'- and 3'-splice sites to release the intron. The products are an intron and two tRNA half-molecules bearing 2',3' cyclic phosphate and 5'-OH termini. Recognizes a pseudosymmetric substrate in which 2 bulged loops of 3 bases are separated by a stem of 4 bp.</text>
</comment>
<comment type="catalytic activity">
    <reaction evidence="1">
        <text>pretRNA = a 3'-half-tRNA molecule with a 5'-OH end + a 5'-half-tRNA molecule with a 2',3'-cyclic phosphate end + an intron with a 2',3'-cyclic phosphate and a 5'-hydroxyl terminus.</text>
        <dbReference type="EC" id="4.6.1.16"/>
    </reaction>
</comment>
<comment type="subunit">
    <text evidence="1">Homotetramer; although the tetramer contains four active sites, only two participate in the cleavage. Therefore, it should be considered as a dimer of dimers.</text>
</comment>
<comment type="similarity">
    <text evidence="1">Belongs to the tRNA-intron endonuclease family. Archaeal short subfamily.</text>
</comment>
<protein>
    <recommendedName>
        <fullName evidence="1">tRNA-splicing endonuclease</fullName>
        <ecNumber evidence="1">4.6.1.16</ecNumber>
    </recommendedName>
    <alternativeName>
        <fullName evidence="1">tRNA-intron endonuclease</fullName>
    </alternativeName>
</protein>
<accession>C3MQX7</accession>
<feature type="chain" id="PRO_1000216081" description="tRNA-splicing endonuclease">
    <location>
        <begin position="1"/>
        <end position="182"/>
    </location>
</feature>
<feature type="active site" evidence="1">
    <location>
        <position position="119"/>
    </location>
</feature>
<feature type="active site" evidence="1">
    <location>
        <position position="127"/>
    </location>
</feature>
<feature type="active site" evidence="1">
    <location>
        <position position="158"/>
    </location>
</feature>
<evidence type="ECO:0000255" key="1">
    <source>
        <dbReference type="HAMAP-Rule" id="MF_01833"/>
    </source>
</evidence>
<dbReference type="EC" id="4.6.1.16" evidence="1"/>
<dbReference type="EMBL" id="CP001399">
    <property type="protein sequence ID" value="ACP35790.1"/>
    <property type="molecule type" value="Genomic_DNA"/>
</dbReference>
<dbReference type="RefSeq" id="WP_012713899.1">
    <property type="nucleotide sequence ID" value="NC_012589.1"/>
</dbReference>
<dbReference type="SMR" id="C3MQX7"/>
<dbReference type="GeneID" id="7807471"/>
<dbReference type="KEGG" id="sis:LS215_1794"/>
<dbReference type="HOGENOM" id="CLU_114393_0_0_2"/>
<dbReference type="OrthoDB" id="46045at2157"/>
<dbReference type="Proteomes" id="UP000001747">
    <property type="component" value="Chromosome"/>
</dbReference>
<dbReference type="GO" id="GO:0005737">
    <property type="term" value="C:cytoplasm"/>
    <property type="evidence" value="ECO:0007669"/>
    <property type="project" value="TreeGrafter"/>
</dbReference>
<dbReference type="GO" id="GO:0016829">
    <property type="term" value="F:lyase activity"/>
    <property type="evidence" value="ECO:0007669"/>
    <property type="project" value="UniProtKB-KW"/>
</dbReference>
<dbReference type="GO" id="GO:0003676">
    <property type="term" value="F:nucleic acid binding"/>
    <property type="evidence" value="ECO:0007669"/>
    <property type="project" value="InterPro"/>
</dbReference>
<dbReference type="GO" id="GO:0000213">
    <property type="term" value="F:tRNA-intron endonuclease activity"/>
    <property type="evidence" value="ECO:0007669"/>
    <property type="project" value="UniProtKB-UniRule"/>
</dbReference>
<dbReference type="GO" id="GO:0006388">
    <property type="term" value="P:tRNA splicing, via endonucleolytic cleavage and ligation"/>
    <property type="evidence" value="ECO:0007669"/>
    <property type="project" value="UniProtKB-UniRule"/>
</dbReference>
<dbReference type="CDD" id="cd22363">
    <property type="entry name" value="tRNA-intron_lyase_C"/>
    <property type="match status" value="1"/>
</dbReference>
<dbReference type="FunFam" id="3.40.1350.10:FF:000006">
    <property type="entry name" value="tRNA-splicing endonuclease"/>
    <property type="match status" value="1"/>
</dbReference>
<dbReference type="Gene3D" id="3.40.1350.10">
    <property type="match status" value="1"/>
</dbReference>
<dbReference type="Gene3D" id="3.40.1170.20">
    <property type="entry name" value="tRNA intron endonuclease, N-terminal domain"/>
    <property type="match status" value="1"/>
</dbReference>
<dbReference type="HAMAP" id="MF_01833">
    <property type="entry name" value="EndA_short"/>
    <property type="match status" value="1"/>
</dbReference>
<dbReference type="InterPro" id="IPR011856">
    <property type="entry name" value="tRNA_endonuc-like_dom_sf"/>
</dbReference>
<dbReference type="InterPro" id="IPR036167">
    <property type="entry name" value="tRNA_intron_Endo_cat-like_sf"/>
</dbReference>
<dbReference type="InterPro" id="IPR006677">
    <property type="entry name" value="tRNA_intron_Endonuc_cat-like"/>
</dbReference>
<dbReference type="InterPro" id="IPR006678">
    <property type="entry name" value="tRNA_intron_Endonuc_N"/>
</dbReference>
<dbReference type="InterPro" id="IPR036740">
    <property type="entry name" value="tRNA_intron_Endonuc_N_sf"/>
</dbReference>
<dbReference type="InterPro" id="IPR006676">
    <property type="entry name" value="tRNA_splic"/>
</dbReference>
<dbReference type="InterPro" id="IPR016442">
    <property type="entry name" value="tRNA_splic_arch_short"/>
</dbReference>
<dbReference type="NCBIfam" id="TIGR00324">
    <property type="entry name" value="endA"/>
    <property type="match status" value="1"/>
</dbReference>
<dbReference type="PANTHER" id="PTHR21227">
    <property type="entry name" value="TRNA-SPLICING ENDONUCLEASE SUBUNIT SEN2"/>
    <property type="match status" value="1"/>
</dbReference>
<dbReference type="PANTHER" id="PTHR21227:SF0">
    <property type="entry name" value="TRNA-SPLICING ENDONUCLEASE SUBUNIT SEN2"/>
    <property type="match status" value="1"/>
</dbReference>
<dbReference type="Pfam" id="PF01974">
    <property type="entry name" value="tRNA_int_endo"/>
    <property type="match status" value="1"/>
</dbReference>
<dbReference type="Pfam" id="PF02778">
    <property type="entry name" value="tRNA_int_endo_N"/>
    <property type="match status" value="1"/>
</dbReference>
<dbReference type="PIRSF" id="PIRSF005285">
    <property type="entry name" value="tRNA_splic_archaea"/>
    <property type="match status" value="1"/>
</dbReference>
<dbReference type="SUPFAM" id="SSF53032">
    <property type="entry name" value="tRNA-intron endonuclease catalytic domain-like"/>
    <property type="match status" value="1"/>
</dbReference>
<dbReference type="SUPFAM" id="SSF55267">
    <property type="entry name" value="tRNA-intron endonuclease N-terminal domain-like"/>
    <property type="match status" value="1"/>
</dbReference>
<sequence length="182" mass="20856">MVKALLVGSKVLIPNVDESRYIYSNGFYGKAIGISKPKDPKDIIRPLELSLIESVYLAKKGLIKVIDKNGEVLEYEKLYEYSSKIINKFDIMYRVYEDLREKGFIVRSGVKYGADFAVYTLGPGLEHAPYVVIAVDIDEEITPHELLSFGRVSHSTRKRLVLALVDRKSESVRYIMFKWVKM</sequence>
<organism>
    <name type="scientific">Saccharolobus islandicus (strain L.S.2.15 / Lassen #1)</name>
    <name type="common">Sulfolobus islandicus</name>
    <dbReference type="NCBI Taxonomy" id="429572"/>
    <lineage>
        <taxon>Archaea</taxon>
        <taxon>Thermoproteota</taxon>
        <taxon>Thermoprotei</taxon>
        <taxon>Sulfolobales</taxon>
        <taxon>Sulfolobaceae</taxon>
        <taxon>Saccharolobus</taxon>
    </lineage>
</organism>